<protein>
    <recommendedName>
        <fullName evidence="1">RNA-splicing ligase RtcB homolog</fullName>
        <ecNumber evidence="1">6.5.1.8</ecNumber>
    </recommendedName>
    <alternativeName>
        <fullName evidence="1">3'-phosphate/5'-hydroxy nucleic acid ligase</fullName>
    </alternativeName>
</protein>
<accession>C1E9Y5</accession>
<organism>
    <name type="scientific">Micromonas commoda (strain RCC299 / NOUM17 / CCMP2709)</name>
    <name type="common">Picoplanktonic green alga</name>
    <dbReference type="NCBI Taxonomy" id="296587"/>
    <lineage>
        <taxon>Eukaryota</taxon>
        <taxon>Viridiplantae</taxon>
        <taxon>Chlorophyta</taxon>
        <taxon>Mamiellophyceae</taxon>
        <taxon>Mamiellales</taxon>
        <taxon>Mamiellaceae</taxon>
        <taxon>Micromonas</taxon>
    </lineage>
</organism>
<proteinExistence type="inferred from homology"/>
<dbReference type="EC" id="6.5.1.8" evidence="1"/>
<dbReference type="EMBL" id="CP001328">
    <property type="protein sequence ID" value="ACO64763.1"/>
    <property type="molecule type" value="Genomic_DNA"/>
</dbReference>
<dbReference type="RefSeq" id="XP_002503505.1">
    <property type="nucleotide sequence ID" value="XM_002503459.1"/>
</dbReference>
<dbReference type="SMR" id="C1E9Y5"/>
<dbReference type="STRING" id="296587.C1E9Y5"/>
<dbReference type="GeneID" id="8245145"/>
<dbReference type="KEGG" id="mis:MICPUN_59883"/>
<dbReference type="eggNOG" id="KOG3833">
    <property type="taxonomic scope" value="Eukaryota"/>
</dbReference>
<dbReference type="InParanoid" id="C1E9Y5"/>
<dbReference type="OMA" id="QTRGVEC"/>
<dbReference type="OrthoDB" id="10249697at2759"/>
<dbReference type="Proteomes" id="UP000002009">
    <property type="component" value="Chromosome 7"/>
</dbReference>
<dbReference type="GO" id="GO:0005634">
    <property type="term" value="C:nucleus"/>
    <property type="evidence" value="ECO:0007669"/>
    <property type="project" value="TreeGrafter"/>
</dbReference>
<dbReference type="GO" id="GO:0072669">
    <property type="term" value="C:tRNA-splicing ligase complex"/>
    <property type="evidence" value="ECO:0007669"/>
    <property type="project" value="UniProtKB-UniRule"/>
</dbReference>
<dbReference type="GO" id="GO:0005525">
    <property type="term" value="F:GTP binding"/>
    <property type="evidence" value="ECO:0007669"/>
    <property type="project" value="UniProtKB-KW"/>
</dbReference>
<dbReference type="GO" id="GO:0046872">
    <property type="term" value="F:metal ion binding"/>
    <property type="evidence" value="ECO:0007669"/>
    <property type="project" value="UniProtKB-KW"/>
</dbReference>
<dbReference type="GO" id="GO:0003972">
    <property type="term" value="F:RNA ligase (ATP) activity"/>
    <property type="evidence" value="ECO:0007669"/>
    <property type="project" value="TreeGrafter"/>
</dbReference>
<dbReference type="GO" id="GO:0170057">
    <property type="term" value="F:RNA ligase (GTP) activity"/>
    <property type="evidence" value="ECO:0007669"/>
    <property type="project" value="UniProtKB-EC"/>
</dbReference>
<dbReference type="GO" id="GO:0006388">
    <property type="term" value="P:tRNA splicing, via endonucleolytic cleavage and ligation"/>
    <property type="evidence" value="ECO:0007669"/>
    <property type="project" value="UniProtKB-UniRule"/>
</dbReference>
<dbReference type="FunFam" id="3.90.1860.10:FF:000001">
    <property type="entry name" value="tRNA-splicing ligase RtcB homolog"/>
    <property type="match status" value="1"/>
</dbReference>
<dbReference type="Gene3D" id="3.90.1860.10">
    <property type="entry name" value="tRNA-splicing ligase RtcB"/>
    <property type="match status" value="1"/>
</dbReference>
<dbReference type="HAMAP" id="MF_03144">
    <property type="entry name" value="RtcB_euk"/>
    <property type="match status" value="1"/>
</dbReference>
<dbReference type="InterPro" id="IPR001233">
    <property type="entry name" value="RtcB"/>
</dbReference>
<dbReference type="InterPro" id="IPR036025">
    <property type="entry name" value="RtcB-like_sf"/>
</dbReference>
<dbReference type="InterPro" id="IPR027513">
    <property type="entry name" value="RtcB_euk"/>
</dbReference>
<dbReference type="PANTHER" id="PTHR11118">
    <property type="entry name" value="RNA-SPLICING LIGASE RTCB HOMOLOG"/>
    <property type="match status" value="1"/>
</dbReference>
<dbReference type="PANTHER" id="PTHR11118:SF1">
    <property type="entry name" value="RNA-SPLICING LIGASE RTCB HOMOLOG"/>
    <property type="match status" value="1"/>
</dbReference>
<dbReference type="Pfam" id="PF01139">
    <property type="entry name" value="RtcB"/>
    <property type="match status" value="1"/>
</dbReference>
<dbReference type="SUPFAM" id="SSF103365">
    <property type="entry name" value="Hypothetical protein PH1602"/>
    <property type="match status" value="1"/>
</dbReference>
<dbReference type="PROSITE" id="PS01288">
    <property type="entry name" value="UPF0027"/>
    <property type="match status" value="1"/>
</dbReference>
<gene>
    <name type="ORF">MICPUN_59883</name>
</gene>
<sequence length="513" mass="56239">MGVMDLPGGRRTYAQEMEFLERVTPTQWRVREGFVPNMRVPGVFYVNKHLETLMFDELRQHVDRGDVGGFLPAVKQLANVACLPGIVSKSIALPDVHSGYGFAIGNVAAFDMSDPNAVVSPGGVGFDINCGVRVVRTNLHERDVTDIKEKLAQSLFDHIPVGVGSQGIIPTSPAGLEAALEMGMDWSLREGYAWAEDKEHCEEYGRMLNADPNKVSARAKKRGLPQMGTLGAGNHYAEIQVVDEIFDKHAADKMGIERLGQVMVMIHSGSRGLGHQVATDALTEMERAMARDGILVNDRQLACAKISSPEGQNYLSAMSCAANYAWVNRSSMTFLCRQAFAKMFDQTPDDLDMHVVYDVSHNIAKIEEHVVDGELKTLLVHRKGSTRAFPPHHPLIPVDYQYTGQPVLIGGTMGTCSYILTGTEKGMEETFGSTCHGAGRARSRNNSRNKLDYTEVLEKLKTKGIAIRVASPKLVMEEAPESYKDVTEVVNTCHDAGISKKAVKLRPIAVVKG</sequence>
<keyword id="KW-0342">GTP-binding</keyword>
<keyword id="KW-0436">Ligase</keyword>
<keyword id="KW-0464">Manganese</keyword>
<keyword id="KW-0479">Metal-binding</keyword>
<keyword id="KW-0547">Nucleotide-binding</keyword>
<keyword id="KW-1185">Reference proteome</keyword>
<keyword id="KW-0819">tRNA processing</keyword>
<evidence type="ECO:0000255" key="1">
    <source>
        <dbReference type="HAMAP-Rule" id="MF_03144"/>
    </source>
</evidence>
<reference key="1">
    <citation type="journal article" date="2009" name="Science">
        <title>Green evolution and dynamic adaptations revealed by genomes of the marine picoeukaryotes Micromonas.</title>
        <authorList>
            <person name="Worden A.Z."/>
            <person name="Lee J.H."/>
            <person name="Mock T."/>
            <person name="Rouze P."/>
            <person name="Simmons M.P."/>
            <person name="Aerts A.L."/>
            <person name="Allen A.E."/>
            <person name="Cuvelier M.L."/>
            <person name="Derelle E."/>
            <person name="Everett M.V."/>
            <person name="Foulon E."/>
            <person name="Grimwood J."/>
            <person name="Gundlach H."/>
            <person name="Henrissat B."/>
            <person name="Napoli C."/>
            <person name="McDonald S.M."/>
            <person name="Parker M.S."/>
            <person name="Rombauts S."/>
            <person name="Salamov A."/>
            <person name="Von Dassow P."/>
            <person name="Badger J.H."/>
            <person name="Coutinho P.M."/>
            <person name="Demir E."/>
            <person name="Dubchak I."/>
            <person name="Gentemann C."/>
            <person name="Eikrem W."/>
            <person name="Gready J.E."/>
            <person name="John U."/>
            <person name="Lanier W."/>
            <person name="Lindquist E.A."/>
            <person name="Lucas S."/>
            <person name="Mayer K.F."/>
            <person name="Moreau H."/>
            <person name="Not F."/>
            <person name="Otillar R."/>
            <person name="Panaud O."/>
            <person name="Pangilinan J."/>
            <person name="Paulsen I."/>
            <person name="Piegu B."/>
            <person name="Poliakov A."/>
            <person name="Robbens S."/>
            <person name="Schmutz J."/>
            <person name="Toulza E."/>
            <person name="Wyss T."/>
            <person name="Zelensky A."/>
            <person name="Zhou K."/>
            <person name="Armbrust E.V."/>
            <person name="Bhattacharya D."/>
            <person name="Goodenough U.W."/>
            <person name="Van de Peer Y."/>
            <person name="Grigoriev I.V."/>
        </authorList>
    </citation>
    <scope>NUCLEOTIDE SEQUENCE [LARGE SCALE GENOMIC DNA]</scope>
    <source>
        <strain>RCC299 / NOUM17</strain>
    </source>
</reference>
<comment type="function">
    <text evidence="1">Catalytic subunit of the tRNA-splicing ligase complex that acts by directly joining spliced tRNA halves to mature-sized tRNAs by incorporating the precursor-derived splice junction phosphate into the mature tRNA as a canonical 3',5'-phosphodiester. May act as an RNA ligase with broad substrate specificity, and may function toward other RNAs.</text>
</comment>
<comment type="catalytic activity">
    <reaction evidence="1">
        <text>a 3'-end 3'-phospho-ribonucleotide-RNA + a 5'-end dephospho-ribonucleoside-RNA + GTP = a ribonucleotidyl-ribonucleotide-RNA + GMP + diphosphate</text>
        <dbReference type="Rhea" id="RHEA:68076"/>
        <dbReference type="Rhea" id="RHEA-COMP:10463"/>
        <dbReference type="Rhea" id="RHEA-COMP:13936"/>
        <dbReference type="Rhea" id="RHEA-COMP:17355"/>
        <dbReference type="ChEBI" id="CHEBI:33019"/>
        <dbReference type="ChEBI" id="CHEBI:37565"/>
        <dbReference type="ChEBI" id="CHEBI:58115"/>
        <dbReference type="ChEBI" id="CHEBI:83062"/>
        <dbReference type="ChEBI" id="CHEBI:138284"/>
        <dbReference type="ChEBI" id="CHEBI:173118"/>
        <dbReference type="EC" id="6.5.1.8"/>
    </reaction>
</comment>
<comment type="catalytic activity">
    <reaction evidence="1">
        <text>a 3'-end 2',3'-cyclophospho-ribonucleotide-RNA + a 5'-end dephospho-ribonucleoside-RNA + GTP + H2O = a ribonucleotidyl-ribonucleotide-RNA + GMP + diphosphate + H(+)</text>
        <dbReference type="Rhea" id="RHEA:68080"/>
        <dbReference type="Rhea" id="RHEA-COMP:10464"/>
        <dbReference type="Rhea" id="RHEA-COMP:13936"/>
        <dbReference type="Rhea" id="RHEA-COMP:17355"/>
        <dbReference type="ChEBI" id="CHEBI:15377"/>
        <dbReference type="ChEBI" id="CHEBI:15378"/>
        <dbReference type="ChEBI" id="CHEBI:33019"/>
        <dbReference type="ChEBI" id="CHEBI:37565"/>
        <dbReference type="ChEBI" id="CHEBI:58115"/>
        <dbReference type="ChEBI" id="CHEBI:83064"/>
        <dbReference type="ChEBI" id="CHEBI:138284"/>
        <dbReference type="ChEBI" id="CHEBI:173118"/>
        <dbReference type="EC" id="6.5.1.8"/>
    </reaction>
</comment>
<comment type="cofactor">
    <cofactor evidence="1">
        <name>Mn(2+)</name>
        <dbReference type="ChEBI" id="CHEBI:29035"/>
    </cofactor>
    <text evidence="1">Binds 2 manganese ions per subunit.</text>
</comment>
<comment type="subunit">
    <text evidence="1">Catalytic component of the tRNA-splicing ligase complex.</text>
</comment>
<comment type="miscellaneous">
    <text evidence="1">Ligation probably proceeds through 3 nucleotidyl transfer steps, with 2',3'-cyclic phosphate termini being hydrolyzed to 3'-P termini in a step that precedes 3'-P activation with GMP. In the first nucleotidyl transfer step, RTCB reacts with GTP to form a covalent RTCB-histidine-GMP intermediate with release of PPi; in the second step, the GMP moiety is transferred to the RNA 3'-P; in the third step, the 5'-OH from the opposite RNA strand attacks the activated 3'-P to form a 3',5'-phosphodiester bond and release GMP.</text>
</comment>
<comment type="similarity">
    <text evidence="1">Belongs to the RtcB family.</text>
</comment>
<name>RTCB_MICCC</name>
<feature type="chain" id="PRO_0000407235" description="RNA-splicing ligase RtcB homolog">
    <location>
        <begin position="1"/>
        <end position="513"/>
    </location>
</feature>
<feature type="active site" description="GMP-histidine intermediate" evidence="1">
    <location>
        <position position="436"/>
    </location>
</feature>
<feature type="binding site" evidence="1">
    <location>
        <position position="127"/>
    </location>
    <ligand>
        <name>Mn(2+)</name>
        <dbReference type="ChEBI" id="CHEBI:29035"/>
        <label>1</label>
    </ligand>
</feature>
<feature type="binding site" evidence="1">
    <location>
        <position position="130"/>
    </location>
    <ligand>
        <name>Mn(2+)</name>
        <dbReference type="ChEBI" id="CHEBI:29035"/>
        <label>1</label>
    </ligand>
</feature>
<feature type="binding site" evidence="1">
    <location>
        <position position="130"/>
    </location>
    <ligand>
        <name>Mn(2+)</name>
        <dbReference type="ChEBI" id="CHEBI:29035"/>
        <label>2</label>
    </ligand>
</feature>
<feature type="binding site" evidence="1">
    <location>
        <begin position="234"/>
        <end position="238"/>
    </location>
    <ligand>
        <name>GMP</name>
        <dbReference type="ChEBI" id="CHEBI:58115"/>
    </ligand>
</feature>
<feature type="binding site" evidence="1">
    <location>
        <position position="235"/>
    </location>
    <ligand>
        <name>Mn(2+)</name>
        <dbReference type="ChEBI" id="CHEBI:29035"/>
        <label>1</label>
    </ligand>
</feature>
<feature type="binding site" evidence="1">
    <location>
        <position position="267"/>
    </location>
    <ligand>
        <name>Mn(2+)</name>
        <dbReference type="ChEBI" id="CHEBI:29035"/>
        <label>2</label>
    </ligand>
</feature>
<feature type="binding site" evidence="1">
    <location>
        <begin position="361"/>
        <end position="362"/>
    </location>
    <ligand>
        <name>GMP</name>
        <dbReference type="ChEBI" id="CHEBI:58115"/>
    </ligand>
</feature>
<feature type="binding site" evidence="1">
    <location>
        <position position="361"/>
    </location>
    <ligand>
        <name>Mn(2+)</name>
        <dbReference type="ChEBI" id="CHEBI:29035"/>
        <label>2</label>
    </ligand>
</feature>
<feature type="binding site" evidence="1">
    <location>
        <begin position="410"/>
        <end position="413"/>
    </location>
    <ligand>
        <name>GMP</name>
        <dbReference type="ChEBI" id="CHEBI:58115"/>
    </ligand>
</feature>
<feature type="binding site" evidence="1">
    <location>
        <position position="417"/>
    </location>
    <ligand>
        <name>GMP</name>
        <dbReference type="ChEBI" id="CHEBI:58115"/>
    </ligand>
</feature>
<feature type="binding site" evidence="1">
    <location>
        <begin position="436"/>
        <end position="439"/>
    </location>
    <ligand>
        <name>GMP</name>
        <dbReference type="ChEBI" id="CHEBI:58115"/>
    </ligand>
</feature>
<feature type="binding site" evidence="1">
    <location>
        <position position="512"/>
    </location>
    <ligand>
        <name>GMP</name>
        <dbReference type="ChEBI" id="CHEBI:58115"/>
    </ligand>
</feature>